<dbReference type="EMBL" id="X73124">
    <property type="protein sequence ID" value="CAA51634.1"/>
    <property type="molecule type" value="Genomic_DNA"/>
</dbReference>
<dbReference type="EMBL" id="AL009126">
    <property type="protein sequence ID" value="CAB15803.1"/>
    <property type="molecule type" value="Genomic_DNA"/>
</dbReference>
<dbReference type="PIR" id="S39733">
    <property type="entry name" value="S39733"/>
</dbReference>
<dbReference type="RefSeq" id="NP_391656.1">
    <property type="nucleotide sequence ID" value="NC_000964.3"/>
</dbReference>
<dbReference type="RefSeq" id="WP_003244348.1">
    <property type="nucleotide sequence ID" value="NZ_OZ025638.1"/>
</dbReference>
<dbReference type="SMR" id="P39636"/>
<dbReference type="FunCoup" id="P39636">
    <property type="interactions" value="141"/>
</dbReference>
<dbReference type="STRING" id="224308.BSU37760"/>
<dbReference type="PaxDb" id="224308-BSU37760"/>
<dbReference type="EnsemblBacteria" id="CAB15803">
    <property type="protein sequence ID" value="CAB15803"/>
    <property type="gene ID" value="BSU_37760"/>
</dbReference>
<dbReference type="GeneID" id="938495"/>
<dbReference type="KEGG" id="bsu:BSU37760"/>
<dbReference type="PATRIC" id="fig|224308.179.peg.4088"/>
<dbReference type="eggNOG" id="COG0833">
    <property type="taxonomic scope" value="Bacteria"/>
</dbReference>
<dbReference type="InParanoid" id="P39636"/>
<dbReference type="OrthoDB" id="9780162at2"/>
<dbReference type="PhylomeDB" id="P39636"/>
<dbReference type="BioCyc" id="BSUB:BSU37760-MONOMER"/>
<dbReference type="Proteomes" id="UP000001570">
    <property type="component" value="Chromosome"/>
</dbReference>
<dbReference type="GO" id="GO:0016020">
    <property type="term" value="C:membrane"/>
    <property type="evidence" value="ECO:0000318"/>
    <property type="project" value="GO_Central"/>
</dbReference>
<dbReference type="GO" id="GO:0005886">
    <property type="term" value="C:plasma membrane"/>
    <property type="evidence" value="ECO:0007669"/>
    <property type="project" value="UniProtKB-SubCell"/>
</dbReference>
<dbReference type="GO" id="GO:0015171">
    <property type="term" value="F:amino acid transmembrane transporter activity"/>
    <property type="evidence" value="ECO:0000318"/>
    <property type="project" value="GO_Central"/>
</dbReference>
<dbReference type="GO" id="GO:0003333">
    <property type="term" value="P:amino acid transmembrane transport"/>
    <property type="evidence" value="ECO:0000318"/>
    <property type="project" value="GO_Central"/>
</dbReference>
<dbReference type="GO" id="GO:0006525">
    <property type="term" value="P:arginine metabolic process"/>
    <property type="evidence" value="ECO:0007669"/>
    <property type="project" value="UniProtKB-KW"/>
</dbReference>
<dbReference type="FunFam" id="1.20.1740.10:FF:000001">
    <property type="entry name" value="Amino acid permease"/>
    <property type="match status" value="1"/>
</dbReference>
<dbReference type="Gene3D" id="1.20.1740.10">
    <property type="entry name" value="Amino acid/polyamine transporter I"/>
    <property type="match status" value="1"/>
</dbReference>
<dbReference type="InterPro" id="IPR004841">
    <property type="entry name" value="AA-permease/SLC12A_dom"/>
</dbReference>
<dbReference type="InterPro" id="IPR004840">
    <property type="entry name" value="Amino_acid_permease_CS"/>
</dbReference>
<dbReference type="PANTHER" id="PTHR43495">
    <property type="entry name" value="GABA PERMEASE"/>
    <property type="match status" value="1"/>
</dbReference>
<dbReference type="PANTHER" id="PTHR43495:SF5">
    <property type="entry name" value="GAMMA-AMINOBUTYRIC ACID PERMEASE"/>
    <property type="match status" value="1"/>
</dbReference>
<dbReference type="Pfam" id="PF00324">
    <property type="entry name" value="AA_permease"/>
    <property type="match status" value="1"/>
</dbReference>
<dbReference type="PIRSF" id="PIRSF006060">
    <property type="entry name" value="AA_transporter"/>
    <property type="match status" value="1"/>
</dbReference>
<dbReference type="PROSITE" id="PS00218">
    <property type="entry name" value="AMINO_ACID_PERMEASE_1"/>
    <property type="match status" value="1"/>
</dbReference>
<protein>
    <recommendedName>
        <fullName>Amino-acid permease RocC</fullName>
    </recommendedName>
</protein>
<name>ROCC_BACSU</name>
<keyword id="KW-0029">Amino-acid transport</keyword>
<keyword id="KW-0056">Arginine metabolism</keyword>
<keyword id="KW-1003">Cell membrane</keyword>
<keyword id="KW-0472">Membrane</keyword>
<keyword id="KW-1185">Reference proteome</keyword>
<keyword id="KW-0812">Transmembrane</keyword>
<keyword id="KW-1133">Transmembrane helix</keyword>
<keyword id="KW-0813">Transport</keyword>
<sequence>MQNHKNELQRSMKSRHLFMIALGGVIGTGLFLGSGFTISQAGPLGAIAAYIIGGFLMYLVMLCLGELAVAMPVAGSFQAYATKFLGQSTGFMIGWLYWFSWANTVGLELTSAGILMQRWLPSVPIWIWCLVFGIVIFLINALSVRSFAEMEFWFSSIKVAAIILFIVIGGAAVFGLIDFKGGQETPFLSNFMTDRGLFPNGVLAVMFTLVMVNFSFQGTELVGIAAGESESPEKTLPKSIRNVIWRTLFFFVLAMFVLVAILPYKTAGVIESPFVAVLDQIGIPFSADIMNFVILTAILSVANSGLYAASRMMWSLSSNQMGPSFLTRLTKKGVPMNALLITLGISGCSLLTSVMAAETVYLWCISISGMVTVVAWMSICASQFFFRRRFLAEGGNVNDLEFRTPLYPLVPILGFCLYGCVLISLIFIPDQRIGLYCGVPIIIFCYAYYHLSIKKRINHETIEKKQTEAQ</sequence>
<feature type="chain" id="PRO_0000054212" description="Amino-acid permease RocC">
    <location>
        <begin position="1"/>
        <end position="470"/>
    </location>
</feature>
<feature type="transmembrane region" description="Helical" evidence="1">
    <location>
        <begin position="18"/>
        <end position="38"/>
    </location>
</feature>
<feature type="transmembrane region" description="Helical" evidence="1">
    <location>
        <begin position="44"/>
        <end position="64"/>
    </location>
</feature>
<feature type="transmembrane region" description="Helical" evidence="1">
    <location>
        <begin position="90"/>
        <end position="110"/>
    </location>
</feature>
<feature type="transmembrane region" description="Helical" evidence="1">
    <location>
        <begin position="119"/>
        <end position="139"/>
    </location>
</feature>
<feature type="transmembrane region" description="Helical" evidence="1">
    <location>
        <begin position="159"/>
        <end position="179"/>
    </location>
</feature>
<feature type="transmembrane region" description="Helical" evidence="1">
    <location>
        <begin position="196"/>
        <end position="216"/>
    </location>
</feature>
<feature type="transmembrane region" description="Helical" evidence="1">
    <location>
        <begin position="243"/>
        <end position="263"/>
    </location>
</feature>
<feature type="transmembrane region" description="Helical" evidence="1">
    <location>
        <begin position="281"/>
        <end position="301"/>
    </location>
</feature>
<feature type="transmembrane region" description="Helical" evidence="1">
    <location>
        <begin position="338"/>
        <end position="358"/>
    </location>
</feature>
<feature type="transmembrane region" description="Helical" evidence="1">
    <location>
        <begin position="360"/>
        <end position="380"/>
    </location>
</feature>
<feature type="transmembrane region" description="Helical" evidence="1">
    <location>
        <begin position="409"/>
        <end position="429"/>
    </location>
</feature>
<feature type="transmembrane region" description="Helical" evidence="1">
    <location>
        <begin position="433"/>
        <end position="453"/>
    </location>
</feature>
<proteinExistence type="evidence at transcript level"/>
<reference key="1">
    <citation type="journal article" date="1993" name="Mol. Microbiol.">
        <title>Bacillus subtilis genome project: cloning and sequencing of the 97 kb region from 325 degrees to 333 degrees.</title>
        <authorList>
            <person name="Glaser P."/>
            <person name="Kunst F."/>
            <person name="Arnaud M."/>
            <person name="Coudart M.P."/>
            <person name="Gonzales W."/>
            <person name="Hullo M.-F."/>
            <person name="Ionescu M."/>
            <person name="Lubochinsky B."/>
            <person name="Marcelino L."/>
            <person name="Moszer I."/>
            <person name="Presecan E."/>
            <person name="Santana M."/>
            <person name="Schneider E."/>
            <person name="Schweizer J."/>
            <person name="Vertes A."/>
            <person name="Rapoport G."/>
            <person name="Danchin A."/>
        </authorList>
    </citation>
    <scope>NUCLEOTIDE SEQUENCE [GENOMIC DNA]</scope>
    <source>
        <strain>168</strain>
    </source>
</reference>
<reference key="2">
    <citation type="journal article" date="1997" name="Nature">
        <title>The complete genome sequence of the Gram-positive bacterium Bacillus subtilis.</title>
        <authorList>
            <person name="Kunst F."/>
            <person name="Ogasawara N."/>
            <person name="Moszer I."/>
            <person name="Albertini A.M."/>
            <person name="Alloni G."/>
            <person name="Azevedo V."/>
            <person name="Bertero M.G."/>
            <person name="Bessieres P."/>
            <person name="Bolotin A."/>
            <person name="Borchert S."/>
            <person name="Borriss R."/>
            <person name="Boursier L."/>
            <person name="Brans A."/>
            <person name="Braun M."/>
            <person name="Brignell S.C."/>
            <person name="Bron S."/>
            <person name="Brouillet S."/>
            <person name="Bruschi C.V."/>
            <person name="Caldwell B."/>
            <person name="Capuano V."/>
            <person name="Carter N.M."/>
            <person name="Choi S.-K."/>
            <person name="Codani J.-J."/>
            <person name="Connerton I.F."/>
            <person name="Cummings N.J."/>
            <person name="Daniel R.A."/>
            <person name="Denizot F."/>
            <person name="Devine K.M."/>
            <person name="Duesterhoeft A."/>
            <person name="Ehrlich S.D."/>
            <person name="Emmerson P.T."/>
            <person name="Entian K.-D."/>
            <person name="Errington J."/>
            <person name="Fabret C."/>
            <person name="Ferrari E."/>
            <person name="Foulger D."/>
            <person name="Fritz C."/>
            <person name="Fujita M."/>
            <person name="Fujita Y."/>
            <person name="Fuma S."/>
            <person name="Galizzi A."/>
            <person name="Galleron N."/>
            <person name="Ghim S.-Y."/>
            <person name="Glaser P."/>
            <person name="Goffeau A."/>
            <person name="Golightly E.J."/>
            <person name="Grandi G."/>
            <person name="Guiseppi G."/>
            <person name="Guy B.J."/>
            <person name="Haga K."/>
            <person name="Haiech J."/>
            <person name="Harwood C.R."/>
            <person name="Henaut A."/>
            <person name="Hilbert H."/>
            <person name="Holsappel S."/>
            <person name="Hosono S."/>
            <person name="Hullo M.-F."/>
            <person name="Itaya M."/>
            <person name="Jones L.-M."/>
            <person name="Joris B."/>
            <person name="Karamata D."/>
            <person name="Kasahara Y."/>
            <person name="Klaerr-Blanchard M."/>
            <person name="Klein C."/>
            <person name="Kobayashi Y."/>
            <person name="Koetter P."/>
            <person name="Koningstein G."/>
            <person name="Krogh S."/>
            <person name="Kumano M."/>
            <person name="Kurita K."/>
            <person name="Lapidus A."/>
            <person name="Lardinois S."/>
            <person name="Lauber J."/>
            <person name="Lazarevic V."/>
            <person name="Lee S.-M."/>
            <person name="Levine A."/>
            <person name="Liu H."/>
            <person name="Masuda S."/>
            <person name="Mauel C."/>
            <person name="Medigue C."/>
            <person name="Medina N."/>
            <person name="Mellado R.P."/>
            <person name="Mizuno M."/>
            <person name="Moestl D."/>
            <person name="Nakai S."/>
            <person name="Noback M."/>
            <person name="Noone D."/>
            <person name="O'Reilly M."/>
            <person name="Ogawa K."/>
            <person name="Ogiwara A."/>
            <person name="Oudega B."/>
            <person name="Park S.-H."/>
            <person name="Parro V."/>
            <person name="Pohl T.M."/>
            <person name="Portetelle D."/>
            <person name="Porwollik S."/>
            <person name="Prescott A.M."/>
            <person name="Presecan E."/>
            <person name="Pujic P."/>
            <person name="Purnelle B."/>
            <person name="Rapoport G."/>
            <person name="Rey M."/>
            <person name="Reynolds S."/>
            <person name="Rieger M."/>
            <person name="Rivolta C."/>
            <person name="Rocha E."/>
            <person name="Roche B."/>
            <person name="Rose M."/>
            <person name="Sadaie Y."/>
            <person name="Sato T."/>
            <person name="Scanlan E."/>
            <person name="Schleich S."/>
            <person name="Schroeter R."/>
            <person name="Scoffone F."/>
            <person name="Sekiguchi J."/>
            <person name="Sekowska A."/>
            <person name="Seror S.J."/>
            <person name="Serror P."/>
            <person name="Shin B.-S."/>
            <person name="Soldo B."/>
            <person name="Sorokin A."/>
            <person name="Tacconi E."/>
            <person name="Takagi T."/>
            <person name="Takahashi H."/>
            <person name="Takemaru K."/>
            <person name="Takeuchi M."/>
            <person name="Tamakoshi A."/>
            <person name="Tanaka T."/>
            <person name="Terpstra P."/>
            <person name="Tognoni A."/>
            <person name="Tosato V."/>
            <person name="Uchiyama S."/>
            <person name="Vandenbol M."/>
            <person name="Vannier F."/>
            <person name="Vassarotti A."/>
            <person name="Viari A."/>
            <person name="Wambutt R."/>
            <person name="Wedler E."/>
            <person name="Wedler H."/>
            <person name="Weitzenegger T."/>
            <person name="Winters P."/>
            <person name="Wipat A."/>
            <person name="Yamamoto H."/>
            <person name="Yamane K."/>
            <person name="Yasumoto K."/>
            <person name="Yata K."/>
            <person name="Yoshida K."/>
            <person name="Yoshikawa H.-F."/>
            <person name="Zumstein E."/>
            <person name="Yoshikawa H."/>
            <person name="Danchin A."/>
        </authorList>
    </citation>
    <scope>NUCLEOTIDE SEQUENCE [LARGE SCALE GENOMIC DNA]</scope>
    <source>
        <strain>168</strain>
    </source>
</reference>
<comment type="function">
    <text>Putative transport protein involved in arginine degradative pathway. Probably transports arginine or ornithine.</text>
</comment>
<comment type="subcellular location">
    <subcellularLocation>
        <location evidence="2">Cell membrane</location>
        <topology evidence="2">Multi-pass membrane protein</topology>
    </subcellularLocation>
</comment>
<comment type="induction">
    <text>By arginine.</text>
</comment>
<comment type="similarity">
    <text evidence="2">Belongs to the amino acid-polyamine-organocation (APC) superfamily.</text>
</comment>
<gene>
    <name type="primary">rocC</name>
    <name type="ordered locus">BSU37760</name>
    <name type="ORF">ipa-78d</name>
</gene>
<organism>
    <name type="scientific">Bacillus subtilis (strain 168)</name>
    <dbReference type="NCBI Taxonomy" id="224308"/>
    <lineage>
        <taxon>Bacteria</taxon>
        <taxon>Bacillati</taxon>
        <taxon>Bacillota</taxon>
        <taxon>Bacilli</taxon>
        <taxon>Bacillales</taxon>
        <taxon>Bacillaceae</taxon>
        <taxon>Bacillus</taxon>
    </lineage>
</organism>
<evidence type="ECO:0000255" key="1"/>
<evidence type="ECO:0000305" key="2"/>
<accession>P39636</accession>